<name>RAPA_KLEP7</name>
<protein>
    <recommendedName>
        <fullName evidence="1">RNA polymerase-associated protein RapA</fullName>
        <ecNumber evidence="1">3.6.4.-</ecNumber>
    </recommendedName>
    <alternativeName>
        <fullName evidence="1">ATP-dependent helicase HepA</fullName>
    </alternativeName>
</protein>
<dbReference type="EC" id="3.6.4.-" evidence="1"/>
<dbReference type="EMBL" id="CP000647">
    <property type="protein sequence ID" value="ABR75518.1"/>
    <property type="molecule type" value="Genomic_DNA"/>
</dbReference>
<dbReference type="RefSeq" id="WP_004177426.1">
    <property type="nucleotide sequence ID" value="NC_009648.1"/>
</dbReference>
<dbReference type="SMR" id="A6T4J7"/>
<dbReference type="STRING" id="272620.KPN_00058"/>
<dbReference type="jPOST" id="A6T4J7"/>
<dbReference type="PaxDb" id="272620-KPN_00058"/>
<dbReference type="EnsemblBacteria" id="ABR75518">
    <property type="protein sequence ID" value="ABR75518"/>
    <property type="gene ID" value="KPN_00058"/>
</dbReference>
<dbReference type="KEGG" id="kpn:KPN_00058"/>
<dbReference type="HOGENOM" id="CLU_011520_0_0_6"/>
<dbReference type="Proteomes" id="UP000000265">
    <property type="component" value="Chromosome"/>
</dbReference>
<dbReference type="GO" id="GO:0005524">
    <property type="term" value="F:ATP binding"/>
    <property type="evidence" value="ECO:0007669"/>
    <property type="project" value="UniProtKB-UniRule"/>
</dbReference>
<dbReference type="GO" id="GO:0003677">
    <property type="term" value="F:DNA binding"/>
    <property type="evidence" value="ECO:0007669"/>
    <property type="project" value="UniProtKB-KW"/>
</dbReference>
<dbReference type="GO" id="GO:0004386">
    <property type="term" value="F:helicase activity"/>
    <property type="evidence" value="ECO:0007669"/>
    <property type="project" value="UniProtKB-UniRule"/>
</dbReference>
<dbReference type="GO" id="GO:0016817">
    <property type="term" value="F:hydrolase activity, acting on acid anhydrides"/>
    <property type="evidence" value="ECO:0007669"/>
    <property type="project" value="InterPro"/>
</dbReference>
<dbReference type="GO" id="GO:0006355">
    <property type="term" value="P:regulation of DNA-templated transcription"/>
    <property type="evidence" value="ECO:0007669"/>
    <property type="project" value="UniProtKB-UniRule"/>
</dbReference>
<dbReference type="CDD" id="cd18011">
    <property type="entry name" value="DEXDc_RapA"/>
    <property type="match status" value="1"/>
</dbReference>
<dbReference type="CDD" id="cd18793">
    <property type="entry name" value="SF2_C_SNF"/>
    <property type="match status" value="1"/>
</dbReference>
<dbReference type="FunFam" id="3.30.360.80:FF:000001">
    <property type="entry name" value="RNA polymerase-associated protein RapA"/>
    <property type="match status" value="1"/>
</dbReference>
<dbReference type="FunFam" id="3.40.50.10810:FF:000012">
    <property type="entry name" value="RNA polymerase-associated protein RapA"/>
    <property type="match status" value="1"/>
</dbReference>
<dbReference type="FunFam" id="3.40.50.300:FF:000350">
    <property type="entry name" value="RNA polymerase-associated protein RapA"/>
    <property type="match status" value="1"/>
</dbReference>
<dbReference type="Gene3D" id="2.30.30.140">
    <property type="match status" value="1"/>
</dbReference>
<dbReference type="Gene3D" id="2.30.30.930">
    <property type="match status" value="1"/>
</dbReference>
<dbReference type="Gene3D" id="3.30.360.80">
    <property type="match status" value="1"/>
</dbReference>
<dbReference type="Gene3D" id="6.10.140.1500">
    <property type="match status" value="1"/>
</dbReference>
<dbReference type="Gene3D" id="6.10.140.2230">
    <property type="match status" value="1"/>
</dbReference>
<dbReference type="Gene3D" id="3.40.50.300">
    <property type="entry name" value="P-loop containing nucleotide triphosphate hydrolases"/>
    <property type="match status" value="1"/>
</dbReference>
<dbReference type="Gene3D" id="3.40.50.10810">
    <property type="entry name" value="Tandem AAA-ATPase domain"/>
    <property type="match status" value="1"/>
</dbReference>
<dbReference type="HAMAP" id="MF_01821">
    <property type="entry name" value="Helicase_RapA"/>
    <property type="match status" value="1"/>
</dbReference>
<dbReference type="InterPro" id="IPR014001">
    <property type="entry name" value="Helicase_ATP-bd"/>
</dbReference>
<dbReference type="InterPro" id="IPR001650">
    <property type="entry name" value="Helicase_C-like"/>
</dbReference>
<dbReference type="InterPro" id="IPR023949">
    <property type="entry name" value="Helicase_RapA"/>
</dbReference>
<dbReference type="InterPro" id="IPR027417">
    <property type="entry name" value="P-loop_NTPase"/>
</dbReference>
<dbReference type="InterPro" id="IPR022737">
    <property type="entry name" value="RapA_C"/>
</dbReference>
<dbReference type="InterPro" id="IPR038718">
    <property type="entry name" value="SNF2-like_sf"/>
</dbReference>
<dbReference type="InterPro" id="IPR049730">
    <property type="entry name" value="SNF2/RAD54-like_C"/>
</dbReference>
<dbReference type="InterPro" id="IPR000330">
    <property type="entry name" value="SNF2_N"/>
</dbReference>
<dbReference type="InterPro" id="IPR040765">
    <property type="entry name" value="Tudor_1_RapA"/>
</dbReference>
<dbReference type="InterPro" id="IPR040766">
    <property type="entry name" value="Tudor_2_RapA"/>
</dbReference>
<dbReference type="NCBIfam" id="NF003426">
    <property type="entry name" value="PRK04914.1"/>
    <property type="match status" value="1"/>
</dbReference>
<dbReference type="PANTHER" id="PTHR45766">
    <property type="entry name" value="DNA ANNEALING HELICASE AND ENDONUCLEASE ZRANB3 FAMILY MEMBER"/>
    <property type="match status" value="1"/>
</dbReference>
<dbReference type="PANTHER" id="PTHR45766:SF6">
    <property type="entry name" value="SWI_SNF-RELATED MATRIX-ASSOCIATED ACTIN-DEPENDENT REGULATOR OF CHROMATIN SUBFAMILY A-LIKE PROTEIN 1"/>
    <property type="match status" value="1"/>
</dbReference>
<dbReference type="Pfam" id="PF00271">
    <property type="entry name" value="Helicase_C"/>
    <property type="match status" value="1"/>
</dbReference>
<dbReference type="Pfam" id="PF12137">
    <property type="entry name" value="RapA_C"/>
    <property type="match status" value="1"/>
</dbReference>
<dbReference type="Pfam" id="PF00176">
    <property type="entry name" value="SNF2-rel_dom"/>
    <property type="match status" value="1"/>
</dbReference>
<dbReference type="Pfam" id="PF18339">
    <property type="entry name" value="Tudor_1_RapA"/>
    <property type="match status" value="1"/>
</dbReference>
<dbReference type="Pfam" id="PF18337">
    <property type="entry name" value="Tudor_RapA"/>
    <property type="match status" value="1"/>
</dbReference>
<dbReference type="SMART" id="SM00487">
    <property type="entry name" value="DEXDc"/>
    <property type="match status" value="1"/>
</dbReference>
<dbReference type="SMART" id="SM00490">
    <property type="entry name" value="HELICc"/>
    <property type="match status" value="1"/>
</dbReference>
<dbReference type="SUPFAM" id="SSF52540">
    <property type="entry name" value="P-loop containing nucleoside triphosphate hydrolases"/>
    <property type="match status" value="2"/>
</dbReference>
<dbReference type="PROSITE" id="PS51192">
    <property type="entry name" value="HELICASE_ATP_BIND_1"/>
    <property type="match status" value="1"/>
</dbReference>
<dbReference type="PROSITE" id="PS51194">
    <property type="entry name" value="HELICASE_CTER"/>
    <property type="match status" value="1"/>
</dbReference>
<comment type="function">
    <text evidence="1">Transcription regulator that activates transcription by stimulating RNA polymerase (RNAP) recycling in case of stress conditions such as supercoiled DNA or high salt concentrations. Probably acts by releasing the RNAP, when it is trapped or immobilized on tightly supercoiled DNA. Does not activate transcription on linear DNA. Probably not involved in DNA repair.</text>
</comment>
<comment type="subunit">
    <text evidence="1">Interacts with the RNAP. Has a higher affinity for the core RNAP than for the holoenzyme. Its ATPase activity is stimulated by binding to RNAP.</text>
</comment>
<comment type="similarity">
    <text evidence="1">Belongs to the SNF2/RAD54 helicase family. RapA subfamily.</text>
</comment>
<keyword id="KW-0010">Activator</keyword>
<keyword id="KW-0067">ATP-binding</keyword>
<keyword id="KW-0238">DNA-binding</keyword>
<keyword id="KW-0347">Helicase</keyword>
<keyword id="KW-0378">Hydrolase</keyword>
<keyword id="KW-0547">Nucleotide-binding</keyword>
<keyword id="KW-0804">Transcription</keyword>
<keyword id="KW-0805">Transcription regulation</keyword>
<sequence>MPFTLGQRWISDTESELGLGTVVALDARMVTLLFPAIGENRLYSRNDSPITRVMFNPGDTITSHEGWQLHVDKVNEENGLLSYTGTRLDTQEANVTLREVLLDSKLVFSKPQDRLFAGQIDRMDRFALRYRARKFQSEQYRMPWSGLRGQRTSLIPHQLHIAHDVGRRHAPRVLLADEVGLGKTIEAGMILHQQLLSGAAERVLIVVPETLQHQWLVEMLRRFNLRFSLFDDERYAEAQHDAYNPFETEQLVICSLDFVRRSKQRLEHLCDAEWDLMVVDEAHHLVWSEEAPSREYQAIEQLAERVPGILLLTATPEQLGMESHFARLRLLDPNRFHDFEQFVEEQQNYRPVADAVALLLAGNKLSDSELNTLGDLIGEQDIEPLLQAANSDREDAQAARQELISMLMDRHGTSRVLFRNTRNGVKGFPKRELHTIRLPLPTQYQTAIKVSGIMGARKTAEERARDMLYPEQIYQEFEGDTGTWWNFDPRVEWLMGYLTSHRSQKVLVICAKAATALQLEQVLREREGIRAAVFHEGMSIIERDRAAAWFAEEDTGAQVLLCSEIGSEGRNFQFASNLVMFDLPFNPDLLEQRIGRLDRIGQAHDIQIHVPYLEKTAQSVLVRWYHEGLDAFEHTCPTGRTVYDSVHDELINYLAAPESIDGFDDLIKSCRQQHDALKAQLEQGRDRLLEIHSNGGEKAQALAESIEEQDDDTSLIAFSMNLFDIVGINQDDRGENLIVLTPSDHMLVPDFPGLPEDGCTITFERDVALSREDAQFITWEHPLIRNGLDLILSGDTGSSTISLLKNKALPVGTLLLELIYVVEAQAPKQLQLNRFLPATPVRMLLDKNGNNLAAQVEFESFNRQLSAVNRHTGSKLVNAVQQDVHAILQQGEAQIAKAAQGLIDAARNEADEKLTAELSRLEALKAVNPNIRDDELAAIESNRQQVMDALAQAGWRLDALRLIVVTHQ</sequence>
<gene>
    <name evidence="1" type="primary">rapA</name>
    <name type="ordered locus">KPN78578_00570</name>
    <name type="ORF">KPN_00058</name>
</gene>
<accession>A6T4J7</accession>
<proteinExistence type="inferred from homology"/>
<reference key="1">
    <citation type="submission" date="2006-09" db="EMBL/GenBank/DDBJ databases">
        <authorList>
            <consortium name="The Klebsiella pneumonia Genome Sequencing Project"/>
            <person name="McClelland M."/>
            <person name="Sanderson E.K."/>
            <person name="Spieth J."/>
            <person name="Clifton W.S."/>
            <person name="Latreille P."/>
            <person name="Sabo A."/>
            <person name="Pepin K."/>
            <person name="Bhonagiri V."/>
            <person name="Porwollik S."/>
            <person name="Ali J."/>
            <person name="Wilson R.K."/>
        </authorList>
    </citation>
    <scope>NUCLEOTIDE SEQUENCE [LARGE SCALE GENOMIC DNA]</scope>
    <source>
        <strain>ATCC 700721 / MGH 78578</strain>
    </source>
</reference>
<evidence type="ECO:0000255" key="1">
    <source>
        <dbReference type="HAMAP-Rule" id="MF_01821"/>
    </source>
</evidence>
<feature type="chain" id="PRO_1000088363" description="RNA polymerase-associated protein RapA">
    <location>
        <begin position="1"/>
        <end position="968"/>
    </location>
</feature>
<feature type="domain" description="Helicase ATP-binding" evidence="1">
    <location>
        <begin position="164"/>
        <end position="334"/>
    </location>
</feature>
<feature type="domain" description="Helicase C-terminal" evidence="1">
    <location>
        <begin position="490"/>
        <end position="644"/>
    </location>
</feature>
<feature type="short sequence motif" description="DEAH box">
    <location>
        <begin position="280"/>
        <end position="283"/>
    </location>
</feature>
<feature type="binding site" evidence="1">
    <location>
        <begin position="177"/>
        <end position="184"/>
    </location>
    <ligand>
        <name>ATP</name>
        <dbReference type="ChEBI" id="CHEBI:30616"/>
    </ligand>
</feature>
<organism>
    <name type="scientific">Klebsiella pneumoniae subsp. pneumoniae (strain ATCC 700721 / MGH 78578)</name>
    <dbReference type="NCBI Taxonomy" id="272620"/>
    <lineage>
        <taxon>Bacteria</taxon>
        <taxon>Pseudomonadati</taxon>
        <taxon>Pseudomonadota</taxon>
        <taxon>Gammaproteobacteria</taxon>
        <taxon>Enterobacterales</taxon>
        <taxon>Enterobacteriaceae</taxon>
        <taxon>Klebsiella/Raoultella group</taxon>
        <taxon>Klebsiella</taxon>
        <taxon>Klebsiella pneumoniae complex</taxon>
    </lineage>
</organism>